<proteinExistence type="evidence at transcript level"/>
<dbReference type="EMBL" id="AF201895">
    <property type="protein sequence ID" value="AAF17567.1"/>
    <property type="molecule type" value="mRNA"/>
</dbReference>
<dbReference type="EMBL" id="CM000127">
    <property type="protein sequence ID" value="EAY87733.1"/>
    <property type="molecule type" value="Genomic_DNA"/>
</dbReference>
<dbReference type="STRING" id="39946.A2XA73"/>
<dbReference type="EnsemblPlants" id="BGIOSGA005497-TA">
    <property type="protein sequence ID" value="BGIOSGA005497-PA"/>
    <property type="gene ID" value="BGIOSGA005497"/>
</dbReference>
<dbReference type="EnsemblPlants" id="OsGoSa_02g0035470.01">
    <property type="protein sequence ID" value="OsGoSa_02g0035470.01"/>
    <property type="gene ID" value="OsGoSa_02g0035470"/>
</dbReference>
<dbReference type="EnsemblPlants" id="OsIR64_02g0035140.01">
    <property type="protein sequence ID" value="OsIR64_02g0035140.01"/>
    <property type="gene ID" value="OsIR64_02g0035140"/>
</dbReference>
<dbReference type="EnsemblPlants" id="OsKYG_02g0035220.01">
    <property type="protein sequence ID" value="OsKYG_02g0035220.01"/>
    <property type="gene ID" value="OsKYG_02g0035220"/>
</dbReference>
<dbReference type="EnsemblPlants" id="OsLaMu_02g0035010.01">
    <property type="protein sequence ID" value="OsLaMu_02g0035010.01"/>
    <property type="gene ID" value="OsLaMu_02g0035010"/>
</dbReference>
<dbReference type="EnsemblPlants" id="OsLima_02g0035390.01">
    <property type="protein sequence ID" value="OsLima_02g0035390.01"/>
    <property type="gene ID" value="OsLima_02g0035390"/>
</dbReference>
<dbReference type="EnsemblPlants" id="OsLiXu_02g0035430.01">
    <property type="protein sequence ID" value="OsLiXu_02g0035430.01"/>
    <property type="gene ID" value="OsLiXu_02g0035430"/>
</dbReference>
<dbReference type="EnsemblPlants" id="OsMH63_02G035740_01">
    <property type="protein sequence ID" value="OsMH63_02G035740_01"/>
    <property type="gene ID" value="OsMH63_02G035740"/>
</dbReference>
<dbReference type="EnsemblPlants" id="OsPr106_02g0035300.01">
    <property type="protein sequence ID" value="OsPr106_02g0035300.01"/>
    <property type="gene ID" value="OsPr106_02g0035300"/>
</dbReference>
<dbReference type="EnsemblPlants" id="OsZS97_02G035050_01">
    <property type="protein sequence ID" value="OsZS97_02G035050_01"/>
    <property type="gene ID" value="OsZS97_02G035050"/>
</dbReference>
<dbReference type="Gramene" id="BGIOSGA005497-TA">
    <property type="protein sequence ID" value="BGIOSGA005497-PA"/>
    <property type="gene ID" value="BGIOSGA005497"/>
</dbReference>
<dbReference type="Gramene" id="OsGoSa_02g0035470.01">
    <property type="protein sequence ID" value="OsGoSa_02g0035470.01"/>
    <property type="gene ID" value="OsGoSa_02g0035470"/>
</dbReference>
<dbReference type="Gramene" id="OsIR64_02g0035140.01">
    <property type="protein sequence ID" value="OsIR64_02g0035140.01"/>
    <property type="gene ID" value="OsIR64_02g0035140"/>
</dbReference>
<dbReference type="Gramene" id="OsKYG_02g0035220.01">
    <property type="protein sequence ID" value="OsKYG_02g0035220.01"/>
    <property type="gene ID" value="OsKYG_02g0035220"/>
</dbReference>
<dbReference type="Gramene" id="OsLaMu_02g0035010.01">
    <property type="protein sequence ID" value="OsLaMu_02g0035010.01"/>
    <property type="gene ID" value="OsLaMu_02g0035010"/>
</dbReference>
<dbReference type="Gramene" id="OsLima_02g0035390.01">
    <property type="protein sequence ID" value="OsLima_02g0035390.01"/>
    <property type="gene ID" value="OsLima_02g0035390"/>
</dbReference>
<dbReference type="Gramene" id="OsLiXu_02g0035430.01">
    <property type="protein sequence ID" value="OsLiXu_02g0035430.01"/>
    <property type="gene ID" value="OsLiXu_02g0035430"/>
</dbReference>
<dbReference type="Gramene" id="OsMH63_02G035740_01">
    <property type="protein sequence ID" value="OsMH63_02G035740_01"/>
    <property type="gene ID" value="OsMH63_02G035740"/>
</dbReference>
<dbReference type="Gramene" id="OsPr106_02g0035300.01">
    <property type="protein sequence ID" value="OsPr106_02g0035300.01"/>
    <property type="gene ID" value="OsPr106_02g0035300"/>
</dbReference>
<dbReference type="Gramene" id="OsZS97_02G035050_01">
    <property type="protein sequence ID" value="OsZS97_02G035050_01"/>
    <property type="gene ID" value="OsZS97_02G035050"/>
</dbReference>
<dbReference type="HOGENOM" id="CLU_037908_0_0_1"/>
<dbReference type="OMA" id="AQKPLRH"/>
<dbReference type="OrthoDB" id="1927209at2759"/>
<dbReference type="Proteomes" id="UP000007015">
    <property type="component" value="Chromosome 2"/>
</dbReference>
<dbReference type="GO" id="GO:0005634">
    <property type="term" value="C:nucleus"/>
    <property type="evidence" value="ECO:0000314"/>
    <property type="project" value="UniProtKB"/>
</dbReference>
<dbReference type="GO" id="GO:0005524">
    <property type="term" value="F:ATP binding"/>
    <property type="evidence" value="ECO:0007669"/>
    <property type="project" value="InterPro"/>
</dbReference>
<dbReference type="GO" id="GO:0032502">
    <property type="term" value="P:developmental process"/>
    <property type="evidence" value="ECO:0007669"/>
    <property type="project" value="InterPro"/>
</dbReference>
<dbReference type="GO" id="GO:0006351">
    <property type="term" value="P:DNA-templated transcription"/>
    <property type="evidence" value="ECO:0007669"/>
    <property type="project" value="InterPro"/>
</dbReference>
<dbReference type="GO" id="GO:0006355">
    <property type="term" value="P:regulation of DNA-templated transcription"/>
    <property type="evidence" value="ECO:0007669"/>
    <property type="project" value="InterPro"/>
</dbReference>
<dbReference type="GO" id="GO:0030912">
    <property type="term" value="P:response to deep water"/>
    <property type="evidence" value="ECO:0000270"/>
    <property type="project" value="UniProtKB"/>
</dbReference>
<dbReference type="GO" id="GO:0009739">
    <property type="term" value="P:response to gibberellin"/>
    <property type="evidence" value="ECO:0000270"/>
    <property type="project" value="UniProtKB"/>
</dbReference>
<dbReference type="InterPro" id="IPR014978">
    <property type="entry name" value="Gln-Leu-Gln_QLQ"/>
</dbReference>
<dbReference type="InterPro" id="IPR031137">
    <property type="entry name" value="GRF"/>
</dbReference>
<dbReference type="InterPro" id="IPR014977">
    <property type="entry name" value="WRC_dom"/>
</dbReference>
<dbReference type="PANTHER" id="PTHR31602">
    <property type="entry name" value="GROWTH-REGULATING FACTOR 5"/>
    <property type="match status" value="1"/>
</dbReference>
<dbReference type="PANTHER" id="PTHR31602:SF46">
    <property type="entry name" value="GROWTH-REGULATING FACTOR 6"/>
    <property type="match status" value="1"/>
</dbReference>
<dbReference type="Pfam" id="PF08880">
    <property type="entry name" value="QLQ"/>
    <property type="match status" value="1"/>
</dbReference>
<dbReference type="Pfam" id="PF08879">
    <property type="entry name" value="WRC"/>
    <property type="match status" value="1"/>
</dbReference>
<dbReference type="SMART" id="SM00951">
    <property type="entry name" value="QLQ"/>
    <property type="match status" value="1"/>
</dbReference>
<dbReference type="PROSITE" id="PS51666">
    <property type="entry name" value="QLQ"/>
    <property type="match status" value="1"/>
</dbReference>
<dbReference type="PROSITE" id="PS51667">
    <property type="entry name" value="WRC"/>
    <property type="match status" value="1"/>
</dbReference>
<comment type="function">
    <text evidence="5">Transcription activator that plays a regulatory role in gibberellin-induced stem elongation.</text>
</comment>
<comment type="subcellular location">
    <subcellularLocation>
        <location evidence="2 4">Nucleus</location>
    </subcellularLocation>
</comment>
<comment type="tissue specificity">
    <text evidence="4 5">Highly expressed in the intercalary meristem of the internode and in the shoot apex. Detected in the leaf primordia and emerging leaves in the uppermost node. Preferentially localized in the epidermis and in the tissues surrounding vascular bundles of the intercalary meristem of the internode and in adventitious roots of the second highest node. Low expression in the coleoptile and in the youngest leaf.</text>
</comment>
<comment type="induction">
    <text evidence="4 5">By gibberellic acid (GA3) and submergence.</text>
</comment>
<comment type="domain">
    <text>The QLQ domain and WRC domain may be involved in protein-protein interaction and DNA-binding, respectively.</text>
</comment>
<comment type="similarity">
    <text evidence="6">Belongs to the GRF family.</text>
</comment>
<protein>
    <recommendedName>
        <fullName>Growth-regulating factor 1</fullName>
        <shortName>OsGRF1</shortName>
    </recommendedName>
    <alternativeName>
        <fullName>Transcription activator GRF1</fullName>
    </alternativeName>
</protein>
<reference key="1">
    <citation type="journal article" date="2000" name="Plant Physiol.">
        <title>A novel gibberellin-induced gene from rice and its potential regulatory role in stem growth.</title>
        <authorList>
            <person name="van der Knaap E."/>
            <person name="Kim J.H."/>
            <person name="Kende H."/>
        </authorList>
    </citation>
    <scope>NUCLEOTIDE SEQUENCE [MRNA]</scope>
    <scope>SUBCELLULAR LOCATION</scope>
    <scope>TISSUE SPECIFICITY</scope>
    <scope>INDUCTION</scope>
    <source>
        <strain>cv. Pin Gaew 56</strain>
    </source>
</reference>
<reference key="2">
    <citation type="journal article" date="2005" name="PLoS Biol.">
        <title>The genomes of Oryza sativa: a history of duplications.</title>
        <authorList>
            <person name="Yu J."/>
            <person name="Wang J."/>
            <person name="Lin W."/>
            <person name="Li S."/>
            <person name="Li H."/>
            <person name="Zhou J."/>
            <person name="Ni P."/>
            <person name="Dong W."/>
            <person name="Hu S."/>
            <person name="Zeng C."/>
            <person name="Zhang J."/>
            <person name="Zhang Y."/>
            <person name="Li R."/>
            <person name="Xu Z."/>
            <person name="Li S."/>
            <person name="Li X."/>
            <person name="Zheng H."/>
            <person name="Cong L."/>
            <person name="Lin L."/>
            <person name="Yin J."/>
            <person name="Geng J."/>
            <person name="Li G."/>
            <person name="Shi J."/>
            <person name="Liu J."/>
            <person name="Lv H."/>
            <person name="Li J."/>
            <person name="Wang J."/>
            <person name="Deng Y."/>
            <person name="Ran L."/>
            <person name="Shi X."/>
            <person name="Wang X."/>
            <person name="Wu Q."/>
            <person name="Li C."/>
            <person name="Ren X."/>
            <person name="Wang J."/>
            <person name="Wang X."/>
            <person name="Li D."/>
            <person name="Liu D."/>
            <person name="Zhang X."/>
            <person name="Ji Z."/>
            <person name="Zhao W."/>
            <person name="Sun Y."/>
            <person name="Zhang Z."/>
            <person name="Bao J."/>
            <person name="Han Y."/>
            <person name="Dong L."/>
            <person name="Ji J."/>
            <person name="Chen P."/>
            <person name="Wu S."/>
            <person name="Liu J."/>
            <person name="Xiao Y."/>
            <person name="Bu D."/>
            <person name="Tan J."/>
            <person name="Yang L."/>
            <person name="Ye C."/>
            <person name="Zhang J."/>
            <person name="Xu J."/>
            <person name="Zhou Y."/>
            <person name="Yu Y."/>
            <person name="Zhang B."/>
            <person name="Zhuang S."/>
            <person name="Wei H."/>
            <person name="Liu B."/>
            <person name="Lei M."/>
            <person name="Yu H."/>
            <person name="Li Y."/>
            <person name="Xu H."/>
            <person name="Wei S."/>
            <person name="He X."/>
            <person name="Fang L."/>
            <person name="Zhang Z."/>
            <person name="Zhang Y."/>
            <person name="Huang X."/>
            <person name="Su Z."/>
            <person name="Tong W."/>
            <person name="Li J."/>
            <person name="Tong Z."/>
            <person name="Li S."/>
            <person name="Ye J."/>
            <person name="Wang L."/>
            <person name="Fang L."/>
            <person name="Lei T."/>
            <person name="Chen C.-S."/>
            <person name="Chen H.-C."/>
            <person name="Xu Z."/>
            <person name="Li H."/>
            <person name="Huang H."/>
            <person name="Zhang F."/>
            <person name="Xu H."/>
            <person name="Li N."/>
            <person name="Zhao C."/>
            <person name="Li S."/>
            <person name="Dong L."/>
            <person name="Huang Y."/>
            <person name="Li L."/>
            <person name="Xi Y."/>
            <person name="Qi Q."/>
            <person name="Li W."/>
            <person name="Zhang B."/>
            <person name="Hu W."/>
            <person name="Zhang Y."/>
            <person name="Tian X."/>
            <person name="Jiao Y."/>
            <person name="Liang X."/>
            <person name="Jin J."/>
            <person name="Gao L."/>
            <person name="Zheng W."/>
            <person name="Hao B."/>
            <person name="Liu S.-M."/>
            <person name="Wang W."/>
            <person name="Yuan L."/>
            <person name="Cao M."/>
            <person name="McDermott J."/>
            <person name="Samudrala R."/>
            <person name="Wang J."/>
            <person name="Wong G.K.-S."/>
            <person name="Yang H."/>
        </authorList>
    </citation>
    <scope>NUCLEOTIDE SEQUENCE [LARGE SCALE GENOMIC DNA]</scope>
    <source>
        <strain>cv. 93-11</strain>
    </source>
</reference>
<reference key="3">
    <citation type="journal article" date="2004" name="Plant Cell Physiol.">
        <title>Whole genome analysis of the OsGRF gene family encoding plant-specific putative transcription activators in rice (Oryza sativa L.).</title>
        <authorList>
            <person name="Choi D."/>
            <person name="Kim J.H."/>
            <person name="Kende H."/>
        </authorList>
    </citation>
    <scope>FUNCTION</scope>
    <scope>TISSUE SPECIFICITY</scope>
    <scope>INDUCTION BY GA3</scope>
    <source>
        <strain>cv. Pin Gaew 56</strain>
    </source>
</reference>
<organism>
    <name type="scientific">Oryza sativa subsp. indica</name>
    <name type="common">Rice</name>
    <dbReference type="NCBI Taxonomy" id="39946"/>
    <lineage>
        <taxon>Eukaryota</taxon>
        <taxon>Viridiplantae</taxon>
        <taxon>Streptophyta</taxon>
        <taxon>Embryophyta</taxon>
        <taxon>Tracheophyta</taxon>
        <taxon>Spermatophyta</taxon>
        <taxon>Magnoliopsida</taxon>
        <taxon>Liliopsida</taxon>
        <taxon>Poales</taxon>
        <taxon>Poaceae</taxon>
        <taxon>BOP clade</taxon>
        <taxon>Oryzoideae</taxon>
        <taxon>Oryzeae</taxon>
        <taxon>Oryzinae</taxon>
        <taxon>Oryza</taxon>
        <taxon>Oryza sativa</taxon>
    </lineage>
</organism>
<keyword id="KW-0010">Activator</keyword>
<keyword id="KW-0539">Nucleus</keyword>
<keyword id="KW-1185">Reference proteome</keyword>
<keyword id="KW-0804">Transcription</keyword>
<keyword id="KW-0805">Transcription regulation</keyword>
<feature type="chain" id="PRO_0000419301" description="Growth-regulating factor 1">
    <location>
        <begin position="1"/>
        <end position="396"/>
    </location>
</feature>
<feature type="domain" description="QLQ" evidence="1">
    <location>
        <begin position="18"/>
        <end position="53"/>
    </location>
</feature>
<feature type="domain" description="WRC" evidence="2">
    <location>
        <begin position="90"/>
        <end position="134"/>
    </location>
</feature>
<feature type="region of interest" description="Disordered" evidence="3">
    <location>
        <begin position="117"/>
        <end position="176"/>
    </location>
</feature>
<feature type="short sequence motif" description="Bipartite nuclear localization signal" evidence="2">
    <location>
        <begin position="86"/>
        <end position="105"/>
    </location>
</feature>
<feature type="short sequence motif" description="Bipartite nuclear localization signal" evidence="2">
    <location>
        <begin position="123"/>
        <end position="130"/>
    </location>
</feature>
<feature type="compositionally biased region" description="Basic residues" evidence="3">
    <location>
        <begin position="120"/>
        <end position="129"/>
    </location>
</feature>
<feature type="compositionally biased region" description="Low complexity" evidence="3">
    <location>
        <begin position="144"/>
        <end position="174"/>
    </location>
</feature>
<sequence length="396" mass="43446">MMMMSGRPSGGAGGGRYPFTASQWQELEHQALIYKYMASGTPIPSDLILPLRRSFLLDSALATSPSLAFPPQPSLGWGCFGMGFGRKAEDPEPGRCRRTDGKKWRCSKEAYPDSKYCEKHMHRGKNRSRKPVEMSLATPPPPSSSATSAASNSSAGVAPTTTTTSSPAPSYSRPAPHDAAPYQALYGGPYAAATARTPAAAAYHAQVSPFHLHIDTTHPHPPPSYYSMDHKEYAYGHATKEVHGEHAFFSDGTEREHHHAAAGHGQWQFKQLGMEPKQSTTPLFPGAGYGHTAASPYAIDLSKEDDDEKERRQQQQQQQQHCFLLGADLRLEKPAGHDHAAAAQKPLRHFFDEWPHEKNSKGSWMGLEGETQLSMSIPMAANDLPITTTSRYHNDE</sequence>
<evidence type="ECO:0000255" key="1">
    <source>
        <dbReference type="PROSITE-ProRule" id="PRU01001"/>
    </source>
</evidence>
<evidence type="ECO:0000255" key="2">
    <source>
        <dbReference type="PROSITE-ProRule" id="PRU01002"/>
    </source>
</evidence>
<evidence type="ECO:0000256" key="3">
    <source>
        <dbReference type="SAM" id="MobiDB-lite"/>
    </source>
</evidence>
<evidence type="ECO:0000269" key="4">
    <source>
    </source>
</evidence>
<evidence type="ECO:0000269" key="5">
    <source>
    </source>
</evidence>
<evidence type="ECO:0000305" key="6"/>
<accession>A2XA73</accession>
<accession>Q9SDZ5</accession>
<name>GRF1_ORYSI</name>
<gene>
    <name type="primary">GRF1</name>
    <name type="ORF">OsI_09149</name>
</gene>